<organism>
    <name type="scientific">Escherichia coli O157:H7</name>
    <dbReference type="NCBI Taxonomy" id="83334"/>
    <lineage>
        <taxon>Bacteria</taxon>
        <taxon>Pseudomonadati</taxon>
        <taxon>Pseudomonadota</taxon>
        <taxon>Gammaproteobacteria</taxon>
        <taxon>Enterobacterales</taxon>
        <taxon>Enterobacteriaceae</taxon>
        <taxon>Escherichia</taxon>
    </lineage>
</organism>
<keyword id="KW-0235">DNA replication</keyword>
<keyword id="KW-0238">DNA-binding</keyword>
<keyword id="KW-0240">DNA-directed RNA polymerase</keyword>
<keyword id="KW-0460">Magnesium</keyword>
<keyword id="KW-0479">Metal-binding</keyword>
<keyword id="KW-0548">Nucleotidyltransferase</keyword>
<keyword id="KW-0639">Primosome</keyword>
<keyword id="KW-1185">Reference proteome</keyword>
<keyword id="KW-0804">Transcription</keyword>
<keyword id="KW-0808">Transferase</keyword>
<keyword id="KW-0862">Zinc</keyword>
<keyword id="KW-0863">Zinc-finger</keyword>
<comment type="function">
    <text evidence="1">RNA polymerase that catalyzes the synthesis of short RNA molecules used as primers for DNA polymerase during DNA replication.</text>
</comment>
<comment type="catalytic activity">
    <reaction evidence="1">
        <text>ssDNA + n NTP = ssDNA/pppN(pN)n-1 hybrid + (n-1) diphosphate.</text>
        <dbReference type="EC" id="2.7.7.101"/>
    </reaction>
</comment>
<comment type="cofactor">
    <cofactor evidence="1">
        <name>Zn(2+)</name>
        <dbReference type="ChEBI" id="CHEBI:29105"/>
    </cofactor>
    <text evidence="1">Binds 1 zinc ion per monomer.</text>
</comment>
<comment type="cofactor">
    <cofactor evidence="1">
        <name>Mg(2+)</name>
        <dbReference type="ChEBI" id="CHEBI:18420"/>
    </cofactor>
    <text evidence="1">Binds two Mg(2+) per subunit.</text>
</comment>
<comment type="subunit">
    <text evidence="1">Monomer. Interacts with DnaB.</text>
</comment>
<comment type="domain">
    <text evidence="1">Contains an N-terminal zinc-binding domain, a central core domain that contains the primase activity, and a C-terminal DnaB-binding domain.</text>
</comment>
<comment type="similarity">
    <text evidence="1">Belongs to the DnaG primase family.</text>
</comment>
<evidence type="ECO:0000255" key="1">
    <source>
        <dbReference type="HAMAP-Rule" id="MF_00974"/>
    </source>
</evidence>
<protein>
    <recommendedName>
        <fullName evidence="1">DNA primase</fullName>
        <ecNumber evidence="1">2.7.7.101</ecNumber>
    </recommendedName>
</protein>
<accession>P0ABS6</accession>
<accession>P02922</accession>
<accession>P02923</accession>
<accession>Q47613</accession>
<proteinExistence type="inferred from homology"/>
<sequence>MAGRIPRVFINDLLARTDIVDLIDARVKLKKQGKNFHACCPFHNEKTPSFTVNGEKQFYHCFGCGAHGNAIDFLMNYDKLEFVETVEELAAMHNLEVPFEAGSGPSQIERHQRQTLYQLMDGLNTFYQQSLQQPVATSARQYLEKRGLSHEVIARFAIGFAPPGWDNVLKRFGGNPENRQSLIDAGMLVTNDQGRSYDRFRERVMFPIRDKRGRVIGFGGRVLGNDTPKYLNSPETDIFHKGRQLYGLYEAQQDNAEPNRLLVVEGYMDVVALAQYGINYAVASLGTSTTADHIQLLFRATNNVICCYDGDRAGRDAAWRALETALPYMTDGRQLRFMFLPDGEDPDTLVRKEGKEAFEARMEQAMPLSAFLFNSLMPQVDLSTPDGRARLSTLALPLISQVPGETLRIYLRQELGNKLGILDDSQLERLMPKAAESGVSRPVPQLKRTTMRILIGLLVQNPELATLVPPLENLDENKLPGLGLFRELVNTCLSQPGLTTGQLLEHYRGTNNAATLEKLSMWDDIADKNIAEQTFTDSLNHMFDSLLELRQEELIARERTHGLSNEERLELWTLNQELAKK</sequence>
<gene>
    <name evidence="1" type="primary">dnaG</name>
    <name type="ordered locus">Z4419</name>
    <name type="ordered locus">ECs3949</name>
</gene>
<name>DNAG_ECO57</name>
<feature type="chain" id="PRO_0000180491" description="DNA primase">
    <location>
        <begin position="1"/>
        <end position="581"/>
    </location>
</feature>
<feature type="domain" description="Toprim" evidence="1">
    <location>
        <begin position="259"/>
        <end position="341"/>
    </location>
</feature>
<feature type="zinc finger region" description="CHC2-type" evidence="1">
    <location>
        <begin position="40"/>
        <end position="64"/>
    </location>
</feature>
<feature type="binding site" evidence="1">
    <location>
        <position position="265"/>
    </location>
    <ligand>
        <name>Mg(2+)</name>
        <dbReference type="ChEBI" id="CHEBI:18420"/>
        <label>1</label>
        <note>catalytic</note>
    </ligand>
</feature>
<feature type="binding site" evidence="1">
    <location>
        <position position="309"/>
    </location>
    <ligand>
        <name>Mg(2+)</name>
        <dbReference type="ChEBI" id="CHEBI:18420"/>
        <label>1</label>
        <note>catalytic</note>
    </ligand>
</feature>
<feature type="binding site" evidence="1">
    <location>
        <position position="309"/>
    </location>
    <ligand>
        <name>Mg(2+)</name>
        <dbReference type="ChEBI" id="CHEBI:18420"/>
        <label>2</label>
    </ligand>
</feature>
<feature type="binding site" evidence="1">
    <location>
        <position position="311"/>
    </location>
    <ligand>
        <name>Mg(2+)</name>
        <dbReference type="ChEBI" id="CHEBI:18420"/>
        <label>2</label>
    </ligand>
</feature>
<reference key="1">
    <citation type="journal article" date="2001" name="Nature">
        <title>Genome sequence of enterohaemorrhagic Escherichia coli O157:H7.</title>
        <authorList>
            <person name="Perna N.T."/>
            <person name="Plunkett G. III"/>
            <person name="Burland V."/>
            <person name="Mau B."/>
            <person name="Glasner J.D."/>
            <person name="Rose D.J."/>
            <person name="Mayhew G.F."/>
            <person name="Evans P.S."/>
            <person name="Gregor J."/>
            <person name="Kirkpatrick H.A."/>
            <person name="Posfai G."/>
            <person name="Hackett J."/>
            <person name="Klink S."/>
            <person name="Boutin A."/>
            <person name="Shao Y."/>
            <person name="Miller L."/>
            <person name="Grotbeck E.J."/>
            <person name="Davis N.W."/>
            <person name="Lim A."/>
            <person name="Dimalanta E.T."/>
            <person name="Potamousis K."/>
            <person name="Apodaca J."/>
            <person name="Anantharaman T.S."/>
            <person name="Lin J."/>
            <person name="Yen G."/>
            <person name="Schwartz D.C."/>
            <person name="Welch R.A."/>
            <person name="Blattner F.R."/>
        </authorList>
    </citation>
    <scope>NUCLEOTIDE SEQUENCE [LARGE SCALE GENOMIC DNA]</scope>
    <source>
        <strain>O157:H7 / EDL933 / ATCC 700927 / EHEC</strain>
    </source>
</reference>
<reference key="2">
    <citation type="journal article" date="2001" name="DNA Res.">
        <title>Complete genome sequence of enterohemorrhagic Escherichia coli O157:H7 and genomic comparison with a laboratory strain K-12.</title>
        <authorList>
            <person name="Hayashi T."/>
            <person name="Makino K."/>
            <person name="Ohnishi M."/>
            <person name="Kurokawa K."/>
            <person name="Ishii K."/>
            <person name="Yokoyama K."/>
            <person name="Han C.-G."/>
            <person name="Ohtsubo E."/>
            <person name="Nakayama K."/>
            <person name="Murata T."/>
            <person name="Tanaka M."/>
            <person name="Tobe T."/>
            <person name="Iida T."/>
            <person name="Takami H."/>
            <person name="Honda T."/>
            <person name="Sasakawa C."/>
            <person name="Ogasawara N."/>
            <person name="Yasunaga T."/>
            <person name="Kuhara S."/>
            <person name="Shiba T."/>
            <person name="Hattori M."/>
            <person name="Shinagawa H."/>
        </authorList>
    </citation>
    <scope>NUCLEOTIDE SEQUENCE [LARGE SCALE GENOMIC DNA]</scope>
    <source>
        <strain>O157:H7 / Sakai / RIMD 0509952 / EHEC</strain>
    </source>
</reference>
<dbReference type="EC" id="2.7.7.101" evidence="1"/>
<dbReference type="EMBL" id="AE005174">
    <property type="protein sequence ID" value="AAG58200.1"/>
    <property type="molecule type" value="Genomic_DNA"/>
</dbReference>
<dbReference type="EMBL" id="BA000007">
    <property type="protein sequence ID" value="BAB37372.1"/>
    <property type="molecule type" value="Genomic_DNA"/>
</dbReference>
<dbReference type="PIR" id="E91122">
    <property type="entry name" value="E91122"/>
</dbReference>
<dbReference type="RefSeq" id="NP_311976.1">
    <property type="nucleotide sequence ID" value="NC_002695.1"/>
</dbReference>
<dbReference type="RefSeq" id="WP_000918827.1">
    <property type="nucleotide sequence ID" value="NZ_VOAI01000009.1"/>
</dbReference>
<dbReference type="BMRB" id="P0ABS6"/>
<dbReference type="SMR" id="P0ABS6"/>
<dbReference type="STRING" id="155864.Z4419"/>
<dbReference type="GeneID" id="916216"/>
<dbReference type="GeneID" id="93778927"/>
<dbReference type="KEGG" id="ece:Z4419"/>
<dbReference type="KEGG" id="ecs:ECs_3949"/>
<dbReference type="PATRIC" id="fig|386585.9.peg.4119"/>
<dbReference type="eggNOG" id="COG0358">
    <property type="taxonomic scope" value="Bacteria"/>
</dbReference>
<dbReference type="HOGENOM" id="CLU_013501_5_4_6"/>
<dbReference type="OMA" id="LMWPIRD"/>
<dbReference type="Proteomes" id="UP000000558">
    <property type="component" value="Chromosome"/>
</dbReference>
<dbReference type="Proteomes" id="UP000002519">
    <property type="component" value="Chromosome"/>
</dbReference>
<dbReference type="GO" id="GO:0005737">
    <property type="term" value="C:cytoplasm"/>
    <property type="evidence" value="ECO:0007669"/>
    <property type="project" value="TreeGrafter"/>
</dbReference>
<dbReference type="GO" id="GO:0000428">
    <property type="term" value="C:DNA-directed RNA polymerase complex"/>
    <property type="evidence" value="ECO:0007669"/>
    <property type="project" value="UniProtKB-KW"/>
</dbReference>
<dbReference type="GO" id="GO:1990077">
    <property type="term" value="C:primosome complex"/>
    <property type="evidence" value="ECO:0007669"/>
    <property type="project" value="UniProtKB-KW"/>
</dbReference>
<dbReference type="GO" id="GO:0003677">
    <property type="term" value="F:DNA binding"/>
    <property type="evidence" value="ECO:0007669"/>
    <property type="project" value="UniProtKB-KW"/>
</dbReference>
<dbReference type="GO" id="GO:0003899">
    <property type="term" value="F:DNA-directed RNA polymerase activity"/>
    <property type="evidence" value="ECO:0007669"/>
    <property type="project" value="InterPro"/>
</dbReference>
<dbReference type="GO" id="GO:0008270">
    <property type="term" value="F:zinc ion binding"/>
    <property type="evidence" value="ECO:0007669"/>
    <property type="project" value="UniProtKB-UniRule"/>
</dbReference>
<dbReference type="GO" id="GO:0006269">
    <property type="term" value="P:DNA replication, synthesis of primer"/>
    <property type="evidence" value="ECO:0007669"/>
    <property type="project" value="UniProtKB-UniRule"/>
</dbReference>
<dbReference type="CDD" id="cd03364">
    <property type="entry name" value="TOPRIM_DnaG_primases"/>
    <property type="match status" value="1"/>
</dbReference>
<dbReference type="FunFam" id="1.10.860.10:FF:000003">
    <property type="entry name" value="DNA primase"/>
    <property type="match status" value="1"/>
</dbReference>
<dbReference type="FunFam" id="1.20.50.20:FF:000001">
    <property type="entry name" value="DNA primase"/>
    <property type="match status" value="1"/>
</dbReference>
<dbReference type="FunFam" id="3.40.1360.10:FF:000002">
    <property type="entry name" value="DNA primase"/>
    <property type="match status" value="1"/>
</dbReference>
<dbReference type="FunFam" id="3.90.580.10:FF:000001">
    <property type="entry name" value="DNA primase"/>
    <property type="match status" value="1"/>
</dbReference>
<dbReference type="FunFam" id="3.90.980.10:FF:000001">
    <property type="entry name" value="DNA primase"/>
    <property type="match status" value="1"/>
</dbReference>
<dbReference type="Gene3D" id="3.40.1360.10">
    <property type="match status" value="1"/>
</dbReference>
<dbReference type="Gene3D" id="3.90.980.10">
    <property type="entry name" value="DNA primase, catalytic core, N-terminal domain"/>
    <property type="match status" value="1"/>
</dbReference>
<dbReference type="Gene3D" id="1.10.860.10">
    <property type="entry name" value="DNAb Helicase, Chain A"/>
    <property type="match status" value="1"/>
</dbReference>
<dbReference type="Gene3D" id="1.20.50.20">
    <property type="entry name" value="DnaG, RNA polymerase domain, helical bundle"/>
    <property type="match status" value="1"/>
</dbReference>
<dbReference type="Gene3D" id="3.90.580.10">
    <property type="entry name" value="Zinc finger, CHC2-type domain"/>
    <property type="match status" value="1"/>
</dbReference>
<dbReference type="HAMAP" id="MF_00974">
    <property type="entry name" value="DNA_primase_DnaG"/>
    <property type="match status" value="1"/>
</dbReference>
<dbReference type="InterPro" id="IPR016136">
    <property type="entry name" value="DNA_helicase_N/primase_C"/>
</dbReference>
<dbReference type="InterPro" id="IPR037068">
    <property type="entry name" value="DNA_primase_core_N_sf"/>
</dbReference>
<dbReference type="InterPro" id="IPR019475">
    <property type="entry name" value="DNA_primase_DnaB-bd"/>
</dbReference>
<dbReference type="InterPro" id="IPR006295">
    <property type="entry name" value="DNA_primase_DnaG"/>
</dbReference>
<dbReference type="InterPro" id="IPR013173">
    <property type="entry name" value="DNA_primase_DnaG_DnaB-bd_dom"/>
</dbReference>
<dbReference type="InterPro" id="IPR036977">
    <property type="entry name" value="DNA_primase_Znf_CHC2"/>
</dbReference>
<dbReference type="InterPro" id="IPR030846">
    <property type="entry name" value="DnaG_bac"/>
</dbReference>
<dbReference type="InterPro" id="IPR013264">
    <property type="entry name" value="DNAG_N"/>
</dbReference>
<dbReference type="InterPro" id="IPR050219">
    <property type="entry name" value="DnaG_primase"/>
</dbReference>
<dbReference type="InterPro" id="IPR034151">
    <property type="entry name" value="TOPRIM_DnaG_bac"/>
</dbReference>
<dbReference type="InterPro" id="IPR006171">
    <property type="entry name" value="TOPRIM_dom"/>
</dbReference>
<dbReference type="InterPro" id="IPR002694">
    <property type="entry name" value="Znf_CHC2"/>
</dbReference>
<dbReference type="NCBIfam" id="TIGR01391">
    <property type="entry name" value="dnaG"/>
    <property type="match status" value="1"/>
</dbReference>
<dbReference type="PANTHER" id="PTHR30313">
    <property type="entry name" value="DNA PRIMASE"/>
    <property type="match status" value="1"/>
</dbReference>
<dbReference type="PANTHER" id="PTHR30313:SF2">
    <property type="entry name" value="DNA PRIMASE"/>
    <property type="match status" value="1"/>
</dbReference>
<dbReference type="Pfam" id="PF10410">
    <property type="entry name" value="DnaB_bind"/>
    <property type="match status" value="1"/>
</dbReference>
<dbReference type="Pfam" id="PF08278">
    <property type="entry name" value="DnaG_DnaB_bind"/>
    <property type="match status" value="1"/>
</dbReference>
<dbReference type="Pfam" id="PF08275">
    <property type="entry name" value="DNAG_N"/>
    <property type="match status" value="1"/>
</dbReference>
<dbReference type="Pfam" id="PF13155">
    <property type="entry name" value="Toprim_2"/>
    <property type="match status" value="1"/>
</dbReference>
<dbReference type="Pfam" id="PF01807">
    <property type="entry name" value="Zn_ribbon_DnaG"/>
    <property type="match status" value="1"/>
</dbReference>
<dbReference type="PIRSF" id="PIRSF002811">
    <property type="entry name" value="DnaG"/>
    <property type="match status" value="1"/>
</dbReference>
<dbReference type="SMART" id="SM00766">
    <property type="entry name" value="DnaG_DnaB_bind"/>
    <property type="match status" value="1"/>
</dbReference>
<dbReference type="SMART" id="SM00493">
    <property type="entry name" value="TOPRIM"/>
    <property type="match status" value="1"/>
</dbReference>
<dbReference type="SMART" id="SM00400">
    <property type="entry name" value="ZnF_CHCC"/>
    <property type="match status" value="1"/>
</dbReference>
<dbReference type="SUPFAM" id="SSF56731">
    <property type="entry name" value="DNA primase core"/>
    <property type="match status" value="1"/>
</dbReference>
<dbReference type="SUPFAM" id="SSF117023">
    <property type="entry name" value="DNA primase DnaG, C-terminal domain"/>
    <property type="match status" value="1"/>
</dbReference>
<dbReference type="SUPFAM" id="SSF57783">
    <property type="entry name" value="Zinc beta-ribbon"/>
    <property type="match status" value="1"/>
</dbReference>
<dbReference type="PROSITE" id="PS50880">
    <property type="entry name" value="TOPRIM"/>
    <property type="match status" value="1"/>
</dbReference>